<keyword id="KW-0244">Early protein</keyword>
<dbReference type="EMBL" id="X03000">
    <property type="protein sequence ID" value="CAA26774.1"/>
    <property type="molecule type" value="Genomic_DNA"/>
</dbReference>
<dbReference type="SMR" id="P05671"/>
<name>Y113_ADE07</name>
<accession>P05671</accession>
<sequence length="104" mass="11373">MAGRAKKKCPWNDSCKTTIKIWPDVRMMLGGWLIACASNKPDPKTWCSSPPSAVLKLPILISSPAASSHPRKRGKEKKERTPTERLAAPARKKQCSAYLAIATG</sequence>
<protein>
    <recommendedName>
        <fullName>Uncharacterized 11.3 kDa early protein</fullName>
    </recommendedName>
</protein>
<feature type="chain" id="PRO_0000221917" description="Uncharacterized 11.3 kDa early protein">
    <location>
        <begin position="1"/>
        <end position="104"/>
    </location>
</feature>
<feature type="region of interest" description="Disordered" evidence="1">
    <location>
        <begin position="62"/>
        <end position="92"/>
    </location>
</feature>
<organism>
    <name type="scientific">Human adenovirus B serotype 7</name>
    <name type="common">HAdV-7</name>
    <name type="synonym">Human adenovirus 7</name>
    <dbReference type="NCBI Taxonomy" id="10519"/>
    <lineage>
        <taxon>Viruses</taxon>
        <taxon>Varidnaviria</taxon>
        <taxon>Bamfordvirae</taxon>
        <taxon>Preplasmiviricota</taxon>
        <taxon>Tectiliviricetes</taxon>
        <taxon>Rowavirales</taxon>
        <taxon>Adenoviridae</taxon>
        <taxon>Mastadenovirus</taxon>
        <taxon>Human mastadenovirus B</taxon>
    </lineage>
</organism>
<organismHost>
    <name type="scientific">Homo sapiens</name>
    <name type="common">Human</name>
    <dbReference type="NCBI Taxonomy" id="9606"/>
</organismHost>
<evidence type="ECO:0000256" key="1">
    <source>
        <dbReference type="SAM" id="MobiDB-lite"/>
    </source>
</evidence>
<proteinExistence type="predicted"/>
<reference key="1">
    <citation type="journal article" date="1983" name="Gene">
        <title>The nucleotide sequence of the genes encoded in early region 2b of human adenovirus type 7.</title>
        <authorList>
            <person name="Engler J.A."/>
            <person name="Hoppe M.S."/>
            <person name="van Bree M.P."/>
        </authorList>
    </citation>
    <scope>NUCLEOTIDE SEQUENCE [GENOMIC DNA]</scope>
    <source>
        <strain>Gomen</strain>
    </source>
</reference>